<protein>
    <recommendedName>
        <fullName>Matrix protein</fullName>
    </recommendedName>
</protein>
<accession>D8V072</accession>
<sequence>MLSRIKQGIKTKRSSSSSSSRSKTGDEDSSLMLRWVYDNDPPLKQTDTFQYLMAPTAPTDKASSSYIATTYKVDCKVEIISRASIRNFDELINIASCLIDSYDGQLLIKPWIITVYLTIITHLVKEPDTHGVRSSVNRYHNGFNEILTLYINKNFAPENKKYSFKKNLSTTHKGNQCNIIISIDLLPTDRKGKSIKDVYEVKMPDNREIPNFQQMLKPYNLKVKEKNGKYLISHKMSSSDDSIDVSDSDENEF</sequence>
<dbReference type="EMBL" id="GQ294472">
    <property type="protein sequence ID" value="ADG86349.1"/>
    <property type="molecule type" value="Viral_cRNA"/>
</dbReference>
<dbReference type="RefSeq" id="YP_007641370.1">
    <property type="nucleotide sequence ID" value="NC_020804.1"/>
</dbReference>
<dbReference type="GeneID" id="14857900"/>
<dbReference type="KEGG" id="vg:14857900"/>
<dbReference type="Proteomes" id="UP000029770">
    <property type="component" value="Segment"/>
</dbReference>
<dbReference type="GO" id="GO:0044200">
    <property type="term" value="C:host cell nuclear membrane"/>
    <property type="evidence" value="ECO:0007669"/>
    <property type="project" value="UniProtKB-SubCell"/>
</dbReference>
<dbReference type="GO" id="GO:0016020">
    <property type="term" value="C:membrane"/>
    <property type="evidence" value="ECO:0007669"/>
    <property type="project" value="UniProtKB-KW"/>
</dbReference>
<dbReference type="GO" id="GO:0019031">
    <property type="term" value="C:viral envelope"/>
    <property type="evidence" value="ECO:0007669"/>
    <property type="project" value="InterPro"/>
</dbReference>
<dbReference type="GO" id="GO:0055036">
    <property type="term" value="C:virion membrane"/>
    <property type="evidence" value="ECO:0007669"/>
    <property type="project" value="UniProtKB-SubCell"/>
</dbReference>
<dbReference type="GO" id="GO:0039660">
    <property type="term" value="F:structural constituent of virion"/>
    <property type="evidence" value="ECO:0007669"/>
    <property type="project" value="UniProtKB-KW"/>
</dbReference>
<dbReference type="GO" id="GO:0039702">
    <property type="term" value="P:viral budding via host ESCRT complex"/>
    <property type="evidence" value="ECO:0007669"/>
    <property type="project" value="UniProtKB-KW"/>
</dbReference>
<dbReference type="InterPro" id="IPR009397">
    <property type="entry name" value="Vesiculo_matrix"/>
</dbReference>
<dbReference type="Pfam" id="PF06326">
    <property type="entry name" value="Vesiculo_matrix"/>
    <property type="match status" value="1"/>
</dbReference>
<comment type="function">
    <text evidence="1">Plays a major role in assembly and budding of virion, by recruiting cellular partners of the ESCRT complexes that play a key role in releasing the budding particle from the host membrane. Condensates the ribonucleocapsid core during virus assembly.</text>
</comment>
<comment type="subunit">
    <text evidence="1">Homomultimer. Interacts with viral nucleocapsid. Interacts with host TSG101.</text>
</comment>
<comment type="subcellular location">
    <subcellularLocation>
        <location evidence="1">Virion membrane</location>
        <topology evidence="1">Peripheral membrane protein</topology>
    </subcellularLocation>
    <subcellularLocation>
        <location evidence="1">Host endomembrane system</location>
        <topology evidence="1">Peripheral membrane protein</topology>
    </subcellularLocation>
    <subcellularLocation>
        <location evidence="1">Host nucleus membrane</location>
        <topology evidence="1">Peripheral membrane protein</topology>
    </subcellularLocation>
</comment>
<comment type="domain">
    <text evidence="1">Late-budding domains (L domains) are short sequence motifs essential for viral particle budding. They recruit proteins of the host ESCRT machinery (Endosomal Sorting Complex Required for Transport) or ESCRT-associated proteins. M contains a PTAP/PSAP motif, which interacts with the UEV domain of TSG101.</text>
</comment>
<evidence type="ECO:0000250" key="1">
    <source>
        <dbReference type="UniProtKB" id="P03519"/>
    </source>
</evidence>
<evidence type="ECO:0000256" key="2">
    <source>
        <dbReference type="SAM" id="MobiDB-lite"/>
    </source>
</evidence>
<organismHost>
    <name type="scientific">Bos taurus</name>
    <name type="common">Bovine</name>
    <dbReference type="NCBI Taxonomy" id="9913"/>
</organismHost>
<organismHost>
    <name type="scientific">Culicoides brevitarsis</name>
    <dbReference type="NCBI Taxonomy" id="469753"/>
</organismHost>
<feature type="chain" id="PRO_0000432063" description="Matrix protein">
    <location>
        <begin position="1"/>
        <end position="253"/>
    </location>
</feature>
<feature type="region of interest" description="Disordered" evidence="2">
    <location>
        <begin position="1"/>
        <end position="26"/>
    </location>
</feature>
<feature type="short sequence motif" description="PTAP/PSAP motif">
    <location>
        <begin position="55"/>
        <end position="58"/>
    </location>
</feature>
<keyword id="KW-1043">Host membrane</keyword>
<keyword id="KW-1048">Host nucleus</keyword>
<keyword id="KW-0945">Host-virus interaction</keyword>
<keyword id="KW-0472">Membrane</keyword>
<keyword id="KW-1185">Reference proteome</keyword>
<keyword id="KW-1198">Viral budding</keyword>
<keyword id="KW-1187">Viral budding via the host ESCRT complexes</keyword>
<keyword id="KW-0468">Viral matrix protein</keyword>
<keyword id="KW-1188">Viral release from host cell</keyword>
<keyword id="KW-0946">Virion</keyword>
<proteinExistence type="inferred from homology"/>
<organism>
    <name type="scientific">Tibrogargan virus (strain CS132)</name>
    <name type="common">TIBV</name>
    <dbReference type="NCBI Taxonomy" id="1559361"/>
    <lineage>
        <taxon>Viruses</taxon>
        <taxon>Riboviria</taxon>
        <taxon>Orthornavirae</taxon>
        <taxon>Negarnaviricota</taxon>
        <taxon>Haploviricotina</taxon>
        <taxon>Monjiviricetes</taxon>
        <taxon>Mononegavirales</taxon>
        <taxon>Rhabdoviridae</taxon>
        <taxon>Alpharhabdovirinae</taxon>
        <taxon>Tibrovirus</taxon>
        <taxon>Tibrovirus tibrogargan</taxon>
    </lineage>
</organism>
<gene>
    <name type="primary">M</name>
</gene>
<reference key="1">
    <citation type="journal article" date="2011" name="J. Gen. Virol.">
        <title>Tibrogargan and Coastal Plains rhabdoviruses: genomic characterization, evolution of novel genes and seroprevalence in Australian livestock.</title>
        <authorList>
            <person name="Gubala A."/>
            <person name="Davis S."/>
            <person name="Weir R."/>
            <person name="Melville L."/>
            <person name="Cowled C."/>
            <person name="Boyle D."/>
        </authorList>
    </citation>
    <scope>NUCLEOTIDE SEQUENCE [GENOMIC RNA]</scope>
    <source>
        <strain>CS132</strain>
    </source>
</reference>
<name>MATRX_TIBVC</name>